<name>RS13_RHIEC</name>
<feature type="chain" id="PRO_0000306687" description="Small ribosomal subunit protein uS13">
    <location>
        <begin position="1"/>
        <end position="122"/>
    </location>
</feature>
<feature type="region of interest" description="Disordered" evidence="2">
    <location>
        <begin position="99"/>
        <end position="122"/>
    </location>
</feature>
<evidence type="ECO:0000255" key="1">
    <source>
        <dbReference type="HAMAP-Rule" id="MF_01315"/>
    </source>
</evidence>
<evidence type="ECO:0000256" key="2">
    <source>
        <dbReference type="SAM" id="MobiDB-lite"/>
    </source>
</evidence>
<evidence type="ECO:0000305" key="3"/>
<organism>
    <name type="scientific">Rhizobium etli (strain ATCC 51251 / DSM 11541 / JCM 21823 / NBRC 15573 / CFN 42)</name>
    <dbReference type="NCBI Taxonomy" id="347834"/>
    <lineage>
        <taxon>Bacteria</taxon>
        <taxon>Pseudomonadati</taxon>
        <taxon>Pseudomonadota</taxon>
        <taxon>Alphaproteobacteria</taxon>
        <taxon>Hyphomicrobiales</taxon>
        <taxon>Rhizobiaceae</taxon>
        <taxon>Rhizobium/Agrobacterium group</taxon>
        <taxon>Rhizobium</taxon>
    </lineage>
</organism>
<proteinExistence type="inferred from homology"/>
<comment type="function">
    <text evidence="1">Located at the top of the head of the 30S subunit, it contacts several helices of the 16S rRNA. In the 70S ribosome it contacts the 23S rRNA (bridge B1a) and protein L5 of the 50S subunit (bridge B1b), connecting the 2 subunits; these bridges are implicated in subunit movement. Contacts the tRNAs in the A and P-sites.</text>
</comment>
<comment type="subunit">
    <text evidence="1">Part of the 30S ribosomal subunit. Forms a loose heterodimer with protein S19. Forms two bridges to the 50S subunit in the 70S ribosome.</text>
</comment>
<comment type="similarity">
    <text evidence="1">Belongs to the universal ribosomal protein uS13 family.</text>
</comment>
<keyword id="KW-1185">Reference proteome</keyword>
<keyword id="KW-0687">Ribonucleoprotein</keyword>
<keyword id="KW-0689">Ribosomal protein</keyword>
<keyword id="KW-0694">RNA-binding</keyword>
<keyword id="KW-0699">rRNA-binding</keyword>
<keyword id="KW-0820">tRNA-binding</keyword>
<reference key="1">
    <citation type="journal article" date="2006" name="Proc. Natl. Acad. Sci. U.S.A.">
        <title>The partitioned Rhizobium etli genome: genetic and metabolic redundancy in seven interacting replicons.</title>
        <authorList>
            <person name="Gonzalez V."/>
            <person name="Santamaria R.I."/>
            <person name="Bustos P."/>
            <person name="Hernandez-Gonzalez I."/>
            <person name="Medrano-Soto A."/>
            <person name="Moreno-Hagelsieb G."/>
            <person name="Janga S.C."/>
            <person name="Ramirez M.A."/>
            <person name="Jimenez-Jacinto V."/>
            <person name="Collado-Vides J."/>
            <person name="Davila G."/>
        </authorList>
    </citation>
    <scope>NUCLEOTIDE SEQUENCE [LARGE SCALE GENOMIC DNA]</scope>
    <source>
        <strain>ATCC 51251 / DSM 11541 / JCM 21823 / NBRC 15573 / CFN 42</strain>
    </source>
</reference>
<sequence>MARIAGVNIPTAKRVVIALTYIHGIGPKFAQEIVEKVGIPAERRVHQLTDAEVLQIRETIDRDYQVEGDLRRETAMNIKRLMDLGCYRGLRHRRGLPVRGQRTHTNARTRKGPAKAIAGKKK</sequence>
<protein>
    <recommendedName>
        <fullName evidence="1">Small ribosomal subunit protein uS13</fullName>
    </recommendedName>
    <alternativeName>
        <fullName evidence="3">30S ribosomal protein S13</fullName>
    </alternativeName>
</protein>
<accession>Q2K9J4</accession>
<gene>
    <name evidence="1" type="primary">rpsM</name>
    <name type="ordered locus">RHE_CH01697</name>
</gene>
<dbReference type="EMBL" id="CP000133">
    <property type="protein sequence ID" value="ABC90492.1"/>
    <property type="molecule type" value="Genomic_DNA"/>
</dbReference>
<dbReference type="RefSeq" id="WP_011424992.1">
    <property type="nucleotide sequence ID" value="NC_007761.1"/>
</dbReference>
<dbReference type="SMR" id="Q2K9J4"/>
<dbReference type="GeneID" id="66145878"/>
<dbReference type="KEGG" id="ret:RHE_CH01697"/>
<dbReference type="eggNOG" id="COG0099">
    <property type="taxonomic scope" value="Bacteria"/>
</dbReference>
<dbReference type="HOGENOM" id="CLU_103849_1_2_5"/>
<dbReference type="OrthoDB" id="9803610at2"/>
<dbReference type="Proteomes" id="UP000001936">
    <property type="component" value="Chromosome"/>
</dbReference>
<dbReference type="GO" id="GO:0005829">
    <property type="term" value="C:cytosol"/>
    <property type="evidence" value="ECO:0007669"/>
    <property type="project" value="TreeGrafter"/>
</dbReference>
<dbReference type="GO" id="GO:0015935">
    <property type="term" value="C:small ribosomal subunit"/>
    <property type="evidence" value="ECO:0007669"/>
    <property type="project" value="TreeGrafter"/>
</dbReference>
<dbReference type="GO" id="GO:0019843">
    <property type="term" value="F:rRNA binding"/>
    <property type="evidence" value="ECO:0007669"/>
    <property type="project" value="UniProtKB-UniRule"/>
</dbReference>
<dbReference type="GO" id="GO:0003735">
    <property type="term" value="F:structural constituent of ribosome"/>
    <property type="evidence" value="ECO:0007669"/>
    <property type="project" value="InterPro"/>
</dbReference>
<dbReference type="GO" id="GO:0000049">
    <property type="term" value="F:tRNA binding"/>
    <property type="evidence" value="ECO:0007669"/>
    <property type="project" value="UniProtKB-UniRule"/>
</dbReference>
<dbReference type="GO" id="GO:0006412">
    <property type="term" value="P:translation"/>
    <property type="evidence" value="ECO:0007669"/>
    <property type="project" value="UniProtKB-UniRule"/>
</dbReference>
<dbReference type="FunFam" id="1.10.8.50:FF:000001">
    <property type="entry name" value="30S ribosomal protein S13"/>
    <property type="match status" value="1"/>
</dbReference>
<dbReference type="FunFam" id="4.10.910.10:FF:000001">
    <property type="entry name" value="30S ribosomal protein S13"/>
    <property type="match status" value="1"/>
</dbReference>
<dbReference type="Gene3D" id="1.10.8.50">
    <property type="match status" value="1"/>
</dbReference>
<dbReference type="Gene3D" id="4.10.910.10">
    <property type="entry name" value="30s ribosomal protein s13, domain 2"/>
    <property type="match status" value="1"/>
</dbReference>
<dbReference type="HAMAP" id="MF_01315">
    <property type="entry name" value="Ribosomal_uS13"/>
    <property type="match status" value="1"/>
</dbReference>
<dbReference type="InterPro" id="IPR027437">
    <property type="entry name" value="Rbsml_uS13_C"/>
</dbReference>
<dbReference type="InterPro" id="IPR001892">
    <property type="entry name" value="Ribosomal_uS13"/>
</dbReference>
<dbReference type="InterPro" id="IPR010979">
    <property type="entry name" value="Ribosomal_uS13-like_H2TH"/>
</dbReference>
<dbReference type="InterPro" id="IPR019980">
    <property type="entry name" value="Ribosomal_uS13_bac-type"/>
</dbReference>
<dbReference type="InterPro" id="IPR018269">
    <property type="entry name" value="Ribosomal_uS13_CS"/>
</dbReference>
<dbReference type="NCBIfam" id="TIGR03631">
    <property type="entry name" value="uS13_bact"/>
    <property type="match status" value="1"/>
</dbReference>
<dbReference type="PANTHER" id="PTHR10871">
    <property type="entry name" value="30S RIBOSOMAL PROTEIN S13/40S RIBOSOMAL PROTEIN S18"/>
    <property type="match status" value="1"/>
</dbReference>
<dbReference type="PANTHER" id="PTHR10871:SF1">
    <property type="entry name" value="SMALL RIBOSOMAL SUBUNIT PROTEIN US13M"/>
    <property type="match status" value="1"/>
</dbReference>
<dbReference type="Pfam" id="PF00416">
    <property type="entry name" value="Ribosomal_S13"/>
    <property type="match status" value="1"/>
</dbReference>
<dbReference type="PIRSF" id="PIRSF002134">
    <property type="entry name" value="Ribosomal_S13"/>
    <property type="match status" value="1"/>
</dbReference>
<dbReference type="SUPFAM" id="SSF46946">
    <property type="entry name" value="S13-like H2TH domain"/>
    <property type="match status" value="1"/>
</dbReference>
<dbReference type="PROSITE" id="PS00646">
    <property type="entry name" value="RIBOSOMAL_S13_1"/>
    <property type="match status" value="1"/>
</dbReference>
<dbReference type="PROSITE" id="PS50159">
    <property type="entry name" value="RIBOSOMAL_S13_2"/>
    <property type="match status" value="1"/>
</dbReference>